<protein>
    <recommendedName>
        <fullName>Olfactory receptor 2V1</fullName>
    </recommendedName>
</protein>
<proteinExistence type="inferred from homology"/>
<dbReference type="EMBL" id="AB065465">
    <property type="protein sequence ID" value="BAC05724.1"/>
    <property type="status" value="ALT_FRAME"/>
    <property type="molecule type" value="Genomic_DNA"/>
</dbReference>
<dbReference type="EMBL" id="AC008620">
    <property type="status" value="NOT_ANNOTATED_CDS"/>
    <property type="molecule type" value="Genomic_DNA"/>
</dbReference>
<dbReference type="CCDS" id="CCDS58992.1"/>
<dbReference type="RefSeq" id="NP_001245212.1">
    <property type="nucleotide sequence ID" value="NM_001258283.2"/>
</dbReference>
<dbReference type="SMR" id="Q8NHB1"/>
<dbReference type="FunCoup" id="Q8NHB1">
    <property type="interactions" value="534"/>
</dbReference>
<dbReference type="STRING" id="9606.ENSP00000492958"/>
<dbReference type="GlyCosmos" id="Q8NHB1">
    <property type="glycosylation" value="1 site, No reported glycans"/>
</dbReference>
<dbReference type="GlyGen" id="Q8NHB1">
    <property type="glycosylation" value="1 site"/>
</dbReference>
<dbReference type="iPTMnet" id="Q8NHB1"/>
<dbReference type="PhosphoSitePlus" id="Q8NHB1"/>
<dbReference type="BioMuta" id="OR2V1"/>
<dbReference type="DMDM" id="162416234"/>
<dbReference type="MassIVE" id="Q8NHB1"/>
<dbReference type="PaxDb" id="9606-ENSP00000404102"/>
<dbReference type="PeptideAtlas" id="Q8NHB1"/>
<dbReference type="Antibodypedia" id="62267">
    <property type="antibodies" value="17 antibodies from 9 providers"/>
</dbReference>
<dbReference type="DNASU" id="26693"/>
<dbReference type="Ensembl" id="ENST00000641318.1">
    <property type="protein sequence ID" value="ENSP00000492958.1"/>
    <property type="gene ID" value="ENSG00000185372.4"/>
</dbReference>
<dbReference type="Ensembl" id="ENST00000641551.1">
    <property type="protein sequence ID" value="ENSP00000492946.1"/>
    <property type="gene ID" value="ENSG00000185372.4"/>
</dbReference>
<dbReference type="Ensembl" id="ENST00000642036.1">
    <property type="protein sequence ID" value="ENSP00000492982.1"/>
    <property type="gene ID" value="ENSG00000185372.4"/>
</dbReference>
<dbReference type="GeneID" id="26693"/>
<dbReference type="KEGG" id="hsa:26693"/>
<dbReference type="MANE-Select" id="ENST00000641551.1">
    <property type="protein sequence ID" value="ENSP00000492946.1"/>
    <property type="RefSeq nucleotide sequence ID" value="NM_001258283.2"/>
    <property type="RefSeq protein sequence ID" value="NP_001245212.1"/>
</dbReference>
<dbReference type="UCSC" id="uc031smg.1">
    <property type="organism name" value="human"/>
</dbReference>
<dbReference type="AGR" id="HGNC:8280"/>
<dbReference type="CTD" id="26693"/>
<dbReference type="GeneCards" id="OR2V1"/>
<dbReference type="HGNC" id="HGNC:8280">
    <property type="gene designation" value="OR2V1"/>
</dbReference>
<dbReference type="HPA" id="ENSG00000185372">
    <property type="expression patterns" value="Tissue enhanced (liver, retina)"/>
</dbReference>
<dbReference type="neXtProt" id="NX_Q8NHB1"/>
<dbReference type="VEuPathDB" id="HostDB:ENSG00000185372"/>
<dbReference type="eggNOG" id="ENOG502SHXQ">
    <property type="taxonomic scope" value="Eukaryota"/>
</dbReference>
<dbReference type="GeneTree" id="ENSGT01130000278260"/>
<dbReference type="HOGENOM" id="CLU_012526_1_2_1"/>
<dbReference type="InParanoid" id="Q8NHB1"/>
<dbReference type="OMA" id="MGIWLNQ"/>
<dbReference type="OrthoDB" id="9824700at2759"/>
<dbReference type="PAN-GO" id="Q8NHB1">
    <property type="GO annotations" value="0 GO annotations based on evolutionary models"/>
</dbReference>
<dbReference type="PhylomeDB" id="Q8NHB1"/>
<dbReference type="TreeFam" id="TF337295"/>
<dbReference type="PathwayCommons" id="Q8NHB1"/>
<dbReference type="Reactome" id="R-HSA-9752946">
    <property type="pathway name" value="Expression and translocation of olfactory receptors"/>
</dbReference>
<dbReference type="SignaLink" id="Q8NHB1"/>
<dbReference type="BioGRID-ORCS" id="26693">
    <property type="hits" value="10 hits in 749 CRISPR screens"/>
</dbReference>
<dbReference type="GenomeRNAi" id="26693"/>
<dbReference type="Pharos" id="Q8NHB1">
    <property type="development level" value="Tdark"/>
</dbReference>
<dbReference type="PRO" id="PR:Q8NHB1"/>
<dbReference type="Proteomes" id="UP000005640">
    <property type="component" value="Chromosome 5"/>
</dbReference>
<dbReference type="RNAct" id="Q8NHB1">
    <property type="molecule type" value="protein"/>
</dbReference>
<dbReference type="Bgee" id="ENSG00000185372">
    <property type="expression patterns" value="Expressed in male germ line stem cell (sensu Vertebrata) in testis and 5 other cell types or tissues"/>
</dbReference>
<dbReference type="ExpressionAtlas" id="Q8NHB1">
    <property type="expression patterns" value="baseline and differential"/>
</dbReference>
<dbReference type="GO" id="GO:0005886">
    <property type="term" value="C:plasma membrane"/>
    <property type="evidence" value="ECO:0000318"/>
    <property type="project" value="GO_Central"/>
</dbReference>
<dbReference type="GO" id="GO:0004930">
    <property type="term" value="F:G protein-coupled receptor activity"/>
    <property type="evidence" value="ECO:0007669"/>
    <property type="project" value="UniProtKB-KW"/>
</dbReference>
<dbReference type="GO" id="GO:0004984">
    <property type="term" value="F:olfactory receptor activity"/>
    <property type="evidence" value="ECO:0000318"/>
    <property type="project" value="GO_Central"/>
</dbReference>
<dbReference type="GO" id="GO:0050911">
    <property type="term" value="P:detection of chemical stimulus involved in sensory perception of smell"/>
    <property type="evidence" value="ECO:0000318"/>
    <property type="project" value="GO_Central"/>
</dbReference>
<dbReference type="CDD" id="cd15421">
    <property type="entry name" value="7tmA_OR2T-like"/>
    <property type="match status" value="1"/>
</dbReference>
<dbReference type="FunFam" id="1.20.1070.10:FF:000008">
    <property type="entry name" value="Olfactory receptor"/>
    <property type="match status" value="1"/>
</dbReference>
<dbReference type="Gene3D" id="1.20.1070.10">
    <property type="entry name" value="Rhodopsin 7-helix transmembrane proteins"/>
    <property type="match status" value="1"/>
</dbReference>
<dbReference type="InterPro" id="IPR000276">
    <property type="entry name" value="GPCR_Rhodpsn"/>
</dbReference>
<dbReference type="InterPro" id="IPR017452">
    <property type="entry name" value="GPCR_Rhodpsn_7TM"/>
</dbReference>
<dbReference type="InterPro" id="IPR000725">
    <property type="entry name" value="Olfact_rcpt"/>
</dbReference>
<dbReference type="PANTHER" id="PTHR26453">
    <property type="entry name" value="OLFACTORY RECEPTOR"/>
    <property type="match status" value="1"/>
</dbReference>
<dbReference type="Pfam" id="PF13853">
    <property type="entry name" value="7tm_4"/>
    <property type="match status" value="1"/>
</dbReference>
<dbReference type="PRINTS" id="PR00237">
    <property type="entry name" value="GPCRRHODOPSN"/>
</dbReference>
<dbReference type="PRINTS" id="PR00245">
    <property type="entry name" value="OLFACTORYR"/>
</dbReference>
<dbReference type="SUPFAM" id="SSF81321">
    <property type="entry name" value="Family A G protein-coupled receptor-like"/>
    <property type="match status" value="1"/>
</dbReference>
<dbReference type="PROSITE" id="PS00237">
    <property type="entry name" value="G_PROTEIN_RECEP_F1_1"/>
    <property type="match status" value="1"/>
</dbReference>
<dbReference type="PROSITE" id="PS50262">
    <property type="entry name" value="G_PROTEIN_RECEP_F1_2"/>
    <property type="match status" value="1"/>
</dbReference>
<feature type="chain" id="PRO_0000312488" description="Olfactory receptor 2V1">
    <location>
        <begin position="1"/>
        <end position="315"/>
    </location>
</feature>
<feature type="topological domain" description="Extracellular" evidence="1">
    <location>
        <begin position="1"/>
        <end position="31"/>
    </location>
</feature>
<feature type="transmembrane region" description="Helical; Name=1" evidence="1">
    <location>
        <begin position="32"/>
        <end position="52"/>
    </location>
</feature>
<feature type="topological domain" description="Cytoplasmic" evidence="1">
    <location>
        <begin position="53"/>
        <end position="58"/>
    </location>
</feature>
<feature type="transmembrane region" description="Helical; Name=2" evidence="1">
    <location>
        <begin position="59"/>
        <end position="79"/>
    </location>
</feature>
<feature type="topological domain" description="Extracellular" evidence="1">
    <location>
        <begin position="80"/>
        <end position="99"/>
    </location>
</feature>
<feature type="transmembrane region" description="Helical; Name=3" evidence="1">
    <location>
        <begin position="100"/>
        <end position="120"/>
    </location>
</feature>
<feature type="topological domain" description="Cytoplasmic" evidence="1">
    <location>
        <begin position="121"/>
        <end position="149"/>
    </location>
</feature>
<feature type="transmembrane region" description="Helical; Name=4" evidence="1">
    <location>
        <begin position="150"/>
        <end position="170"/>
    </location>
</feature>
<feature type="topological domain" description="Extracellular" evidence="1">
    <location>
        <begin position="171"/>
        <end position="198"/>
    </location>
</feature>
<feature type="transmembrane region" description="Helical; Name=5" evidence="1">
    <location>
        <begin position="199"/>
        <end position="219"/>
    </location>
</feature>
<feature type="topological domain" description="Cytoplasmic" evidence="1">
    <location>
        <begin position="220"/>
        <end position="238"/>
    </location>
</feature>
<feature type="transmembrane region" description="Helical; Name=6" evidence="1">
    <location>
        <begin position="239"/>
        <end position="259"/>
    </location>
</feature>
<feature type="topological domain" description="Extracellular" evidence="1">
    <location>
        <begin position="260"/>
        <end position="272"/>
    </location>
</feature>
<feature type="transmembrane region" description="Helical; Name=7" evidence="1">
    <location>
        <begin position="273"/>
        <end position="293"/>
    </location>
</feature>
<feature type="topological domain" description="Cytoplasmic" evidence="1">
    <location>
        <begin position="294"/>
        <end position="315"/>
    </location>
</feature>
<feature type="glycosylation site" description="N-linked (GlcNAc...) asparagine" evidence="1">
    <location>
        <position position="6"/>
    </location>
</feature>
<feature type="disulfide bond" evidence="2">
    <location>
        <begin position="98"/>
        <end position="180"/>
    </location>
</feature>
<organism>
    <name type="scientific">Homo sapiens</name>
    <name type="common">Human</name>
    <dbReference type="NCBI Taxonomy" id="9606"/>
    <lineage>
        <taxon>Eukaryota</taxon>
        <taxon>Metazoa</taxon>
        <taxon>Chordata</taxon>
        <taxon>Craniata</taxon>
        <taxon>Vertebrata</taxon>
        <taxon>Euteleostomi</taxon>
        <taxon>Mammalia</taxon>
        <taxon>Eutheria</taxon>
        <taxon>Euarchontoglires</taxon>
        <taxon>Primates</taxon>
        <taxon>Haplorrhini</taxon>
        <taxon>Catarrhini</taxon>
        <taxon>Hominidae</taxon>
        <taxon>Homo</taxon>
    </lineage>
</organism>
<sequence length="315" mass="34857">MGRWVNQSYTDGFFLLGIFSHSQTDLVLFSAVMVVFTVALCGNVLLIFLIYLDAGLHTPMYFFLSQLSLMDLMLVCNIVPKMAANFLSGRKSISFVGCGIQIGFFVSLVGSEGLLLGLMAYDRYVAVSHPLHYPILMNQRVCLQITGSSWAFGIIDGVIQMVAAMGLPYCGSRSVDHFFCEVQALLKLACADTSLFDTLLFACCVFMLLLPFSIIMASYACILGAVLRIRSAQAWKKALATCSSHLTAVTLFYGAAMFMYLRPRRYRAPSHDKVASIFYTVLTPMLNPLIYSLRNGEVMGALRKGLDRCRIGSQH</sequence>
<keyword id="KW-1003">Cell membrane</keyword>
<keyword id="KW-1015">Disulfide bond</keyword>
<keyword id="KW-0297">G-protein coupled receptor</keyword>
<keyword id="KW-0325">Glycoprotein</keyword>
<keyword id="KW-0472">Membrane</keyword>
<keyword id="KW-0552">Olfaction</keyword>
<keyword id="KW-0675">Receptor</keyword>
<keyword id="KW-1185">Reference proteome</keyword>
<keyword id="KW-0716">Sensory transduction</keyword>
<keyword id="KW-0807">Transducer</keyword>
<keyword id="KW-0812">Transmembrane</keyword>
<keyword id="KW-1133">Transmembrane helix</keyword>
<reference key="1">
    <citation type="submission" date="2001-07" db="EMBL/GenBank/DDBJ databases">
        <title>Genome-wide discovery and analysis of human seven transmembrane helix receptor genes.</title>
        <authorList>
            <person name="Suwa M."/>
            <person name="Sato T."/>
            <person name="Okouchi I."/>
            <person name="Arita M."/>
            <person name="Futami K."/>
            <person name="Matsumoto S."/>
            <person name="Tsutsumi S."/>
            <person name="Aburatani H."/>
            <person name="Asai K."/>
            <person name="Akiyama Y."/>
        </authorList>
    </citation>
    <scope>NUCLEOTIDE SEQUENCE [GENOMIC DNA]</scope>
</reference>
<reference key="2">
    <citation type="journal article" date="2004" name="Nature">
        <title>The DNA sequence and comparative analysis of human chromosome 5.</title>
        <authorList>
            <person name="Schmutz J."/>
            <person name="Martin J."/>
            <person name="Terry A."/>
            <person name="Couronne O."/>
            <person name="Grimwood J."/>
            <person name="Lowry S."/>
            <person name="Gordon L.A."/>
            <person name="Scott D."/>
            <person name="Xie G."/>
            <person name="Huang W."/>
            <person name="Hellsten U."/>
            <person name="Tran-Gyamfi M."/>
            <person name="She X."/>
            <person name="Prabhakar S."/>
            <person name="Aerts A."/>
            <person name="Altherr M."/>
            <person name="Bajorek E."/>
            <person name="Black S."/>
            <person name="Branscomb E."/>
            <person name="Caoile C."/>
            <person name="Challacombe J.F."/>
            <person name="Chan Y.M."/>
            <person name="Denys M."/>
            <person name="Detter J.C."/>
            <person name="Escobar J."/>
            <person name="Flowers D."/>
            <person name="Fotopulos D."/>
            <person name="Glavina T."/>
            <person name="Gomez M."/>
            <person name="Gonzales E."/>
            <person name="Goodstein D."/>
            <person name="Grigoriev I."/>
            <person name="Groza M."/>
            <person name="Hammon N."/>
            <person name="Hawkins T."/>
            <person name="Haydu L."/>
            <person name="Israni S."/>
            <person name="Jett J."/>
            <person name="Kadner K."/>
            <person name="Kimball H."/>
            <person name="Kobayashi A."/>
            <person name="Lopez F."/>
            <person name="Lou Y."/>
            <person name="Martinez D."/>
            <person name="Medina C."/>
            <person name="Morgan J."/>
            <person name="Nandkeshwar R."/>
            <person name="Noonan J.P."/>
            <person name="Pitluck S."/>
            <person name="Pollard M."/>
            <person name="Predki P."/>
            <person name="Priest J."/>
            <person name="Ramirez L."/>
            <person name="Retterer J."/>
            <person name="Rodriguez A."/>
            <person name="Rogers S."/>
            <person name="Salamov A."/>
            <person name="Salazar A."/>
            <person name="Thayer N."/>
            <person name="Tice H."/>
            <person name="Tsai M."/>
            <person name="Ustaszewska A."/>
            <person name="Vo N."/>
            <person name="Wheeler J."/>
            <person name="Wu K."/>
            <person name="Yang J."/>
            <person name="Dickson M."/>
            <person name="Cheng J.-F."/>
            <person name="Eichler E.E."/>
            <person name="Olsen A."/>
            <person name="Pennacchio L.A."/>
            <person name="Rokhsar D.S."/>
            <person name="Richardson P."/>
            <person name="Lucas S.M."/>
            <person name="Myers R.M."/>
            <person name="Rubin E.M."/>
        </authorList>
    </citation>
    <scope>NUCLEOTIDE SEQUENCE [LARGE SCALE GENOMIC DNA]</scope>
</reference>
<name>OR2V1_HUMAN</name>
<comment type="function">
    <text evidence="3">Odorant receptor.</text>
</comment>
<comment type="subcellular location">
    <subcellularLocation>
        <location>Cell membrane</location>
        <topology>Multi-pass membrane protein</topology>
    </subcellularLocation>
</comment>
<comment type="similarity">
    <text evidence="2">Belongs to the G-protein coupled receptor 1 family.</text>
</comment>
<comment type="sequence caution" evidence="3">
    <conflict type="frameshift">
        <sequence resource="EMBL-CDS" id="BAC05724"/>
    </conflict>
</comment>
<comment type="online information" name="Human Olfactory Receptor Data Exploratorium (HORDE)">
    <link uri="http://genome.weizmann.ac.il/horde/card/index/symbol:OR2V1"/>
</comment>
<evidence type="ECO:0000255" key="1"/>
<evidence type="ECO:0000255" key="2">
    <source>
        <dbReference type="PROSITE-ProRule" id="PRU00521"/>
    </source>
</evidence>
<evidence type="ECO:0000305" key="3"/>
<accession>Q8NHB1</accession>
<gene>
    <name type="primary">OR2V1</name>
</gene>